<organism>
    <name type="scientific">Oncorhynchus nerka</name>
    <name type="common">Sockeye salmon</name>
    <name type="synonym">Salmo nerka</name>
    <dbReference type="NCBI Taxonomy" id="8023"/>
    <lineage>
        <taxon>Eukaryota</taxon>
        <taxon>Metazoa</taxon>
        <taxon>Chordata</taxon>
        <taxon>Craniata</taxon>
        <taxon>Vertebrata</taxon>
        <taxon>Euteleostomi</taxon>
        <taxon>Actinopterygii</taxon>
        <taxon>Neopterygii</taxon>
        <taxon>Teleostei</taxon>
        <taxon>Protacanthopterygii</taxon>
        <taxon>Salmoniformes</taxon>
        <taxon>Salmonidae</taxon>
        <taxon>Salmoninae</taxon>
        <taxon>Oncorhynchus</taxon>
    </lineage>
</organism>
<protein>
    <recommendedName>
        <fullName>Stanniocalcin</fullName>
        <shortName>STC</shortName>
    </recommendedName>
    <alternativeName>
        <fullName>Corpuscles of Stannius protein</fullName>
        <shortName>CS</shortName>
    </alternativeName>
    <alternativeName>
        <fullName>Hypocalcin</fullName>
    </alternativeName>
    <alternativeName>
        <fullName>Teleocalcin</fullName>
    </alternativeName>
</protein>
<sequence>FSPNSPSDVARCLNGALDVGCGTFACLENSTCDTDGMHDI</sequence>
<feature type="chain" id="PRO_0000182021" description="Stanniocalcin">
    <location>
        <begin position="1"/>
        <end position="40" status="greater than"/>
    </location>
</feature>
<feature type="glycosylation site" description="N-linked (GlcNAc...) asparagine">
    <location>
        <position position="29"/>
    </location>
</feature>
<feature type="unsure residue">
    <location>
        <position position="29"/>
    </location>
</feature>
<feature type="non-terminal residue">
    <location>
        <position position="40"/>
    </location>
</feature>
<accession>P43649</accession>
<dbReference type="PIR" id="A60841">
    <property type="entry name" value="A60841"/>
</dbReference>
<dbReference type="SMR" id="P43649"/>
<dbReference type="GlyCosmos" id="P43649">
    <property type="glycosylation" value="1 site, No reported glycans"/>
</dbReference>
<dbReference type="GO" id="GO:0005615">
    <property type="term" value="C:extracellular space"/>
    <property type="evidence" value="ECO:0000314"/>
    <property type="project" value="AgBase"/>
</dbReference>
<dbReference type="GO" id="GO:0005179">
    <property type="term" value="F:hormone activity"/>
    <property type="evidence" value="ECO:0007669"/>
    <property type="project" value="UniProtKB-KW"/>
</dbReference>
<dbReference type="GO" id="GO:0006816">
    <property type="term" value="P:calcium ion transport"/>
    <property type="evidence" value="ECO:0007669"/>
    <property type="project" value="UniProtKB-KW"/>
</dbReference>
<dbReference type="InterPro" id="IPR004978">
    <property type="entry name" value="Stanniocalcin"/>
</dbReference>
<dbReference type="Pfam" id="PF03298">
    <property type="entry name" value="Stanniocalcin"/>
    <property type="match status" value="1"/>
</dbReference>
<evidence type="ECO:0000305" key="1"/>
<gene>
    <name type="primary">stc</name>
</gene>
<name>STC_ONCNE</name>
<comment type="function">
    <text>Its primary function is the prevention of hypercalcemia. Upon release into the circulation, it lowers calcium transport by the gills, thereby reducing its rate of influx from the environment into the extracellular compartment. STC also stimulates phosphate reabsorption by renal proximal tubules. The consequence of this action is increased levels of plasma phosphate, which combines with excess calcium and promotes its disposal into bone and scales.</text>
</comment>
<comment type="subunit">
    <text>Homodimer; disulfide-linked.</text>
</comment>
<comment type="subcellular location">
    <subcellularLocation>
        <location>Secreted</location>
    </subcellularLocation>
</comment>
<comment type="tissue specificity">
    <text>Produced and secreted by the corpuscles of Stannius.</text>
</comment>
<comment type="similarity">
    <text evidence="1">Belongs to the stanniocalcin family.</text>
</comment>
<keyword id="KW-0106">Calcium</keyword>
<keyword id="KW-0109">Calcium transport</keyword>
<keyword id="KW-0903">Direct protein sequencing</keyword>
<keyword id="KW-1015">Disulfide bond</keyword>
<keyword id="KW-0325">Glycoprotein</keyword>
<keyword id="KW-0372">Hormone</keyword>
<keyword id="KW-0406">Ion transport</keyword>
<keyword id="KW-0964">Secreted</keyword>
<keyword id="KW-0813">Transport</keyword>
<proteinExistence type="evidence at protein level"/>
<reference key="1">
    <citation type="journal article" date="1988" name="Gen. Comp. Endocrinol.">
        <title>Comparative biochemistry and physiology of teleocalcin from sockeye and coho salmon.</title>
        <authorList>
            <person name="Wagner G.F."/>
            <person name="Fenwick J.C."/>
            <person name="Park C.M."/>
            <person name="Milliken C."/>
            <person name="Copp D.H."/>
            <person name="Friesen H.G."/>
        </authorList>
    </citation>
    <scope>PROTEIN SEQUENCE</scope>
</reference>